<organismHost>
    <name type="scientific">Homo sapiens</name>
    <name type="common">Human</name>
    <dbReference type="NCBI Taxonomy" id="9606"/>
</organismHost>
<protein>
    <recommendedName>
        <fullName evidence="1">Protease</fullName>
        <ecNumber evidence="1">3.4.22.39</ecNumber>
    </recommendedName>
    <alternativeName>
        <fullName evidence="1">Adenain</fullName>
    </alternativeName>
    <alternativeName>
        <fullName evidence="1">Adenovirus protease</fullName>
        <shortName evidence="1">AVP</shortName>
    </alternativeName>
    <alternativeName>
        <fullName evidence="1">Adenovirus proteinase</fullName>
    </alternativeName>
    <alternativeName>
        <fullName evidence="1">Endoprotease</fullName>
    </alternativeName>
</protein>
<organism>
    <name type="scientific">Human adenovirus F serotype 40</name>
    <name type="common">HAdV-40</name>
    <name type="synonym">Human adenovirus 40</name>
    <dbReference type="NCBI Taxonomy" id="28284"/>
    <lineage>
        <taxon>Viruses</taxon>
        <taxon>Varidnaviria</taxon>
        <taxon>Bamfordvirae</taxon>
        <taxon>Preplasmiviricota</taxon>
        <taxon>Tectiliviricetes</taxon>
        <taxon>Rowavirales</taxon>
        <taxon>Adenoviridae</taxon>
        <taxon>Mastadenovirus</taxon>
        <taxon>Human mastadenovirus F</taxon>
    </lineage>
</organism>
<feature type="chain" id="PRO_0000218030" description="Protease">
    <location>
        <begin position="1"/>
        <end position="205"/>
    </location>
</feature>
<feature type="active site" evidence="1">
    <location>
        <position position="54"/>
    </location>
</feature>
<feature type="active site" evidence="1">
    <location>
        <position position="71"/>
    </location>
</feature>
<feature type="active site" evidence="1">
    <location>
        <position position="122"/>
    </location>
</feature>
<feature type="site" description="Cleavage; by autolysis" evidence="1">
    <location>
        <begin position="51"/>
        <end position="52"/>
    </location>
</feature>
<feature type="disulfide bond" description="Interchain (with C-10 in cleaved protease cofactor pVI-C)" evidence="1">
    <location>
        <position position="104"/>
    </location>
</feature>
<reference key="1">
    <citation type="journal article" date="1988" name="Virology">
        <title>The genes encoding the DNA binding protein and the 23K protease of adenovirus types 40 and 41.</title>
        <authorList>
            <person name="Vos H.L."/>
            <person name="der Lee F.M."/>
            <person name="Reemst A.M.C.B."/>
            <person name="van Loon A.E."/>
            <person name="Sussenbach J.S."/>
        </authorList>
    </citation>
    <scope>NUCLEOTIDE SEQUENCE [GENOMIC DNA]</scope>
</reference>
<evidence type="ECO:0000255" key="1">
    <source>
        <dbReference type="HAMAP-Rule" id="MF_04059"/>
    </source>
</evidence>
<gene>
    <name evidence="1" type="primary">L3</name>
</gene>
<accession>P11825</accession>
<sequence length="205" mass="23337">MGSSEQELVAIVRELGCGPYFLGTFDKRFPGFMAPHKLACAIVNTAGRETGGVHWLALAWNPKNRTCYLFDPFGFSDERLKQIYQFEYEGLLKRSALASTPDHCITLIKSTQTVQGPFSAACGLFCCMFLHAFVNWPTSPMERNPTMDLLTGVPNSMLQSPQVVPTLRHNQERLYRFLAQRSPYFQRHCERIKKATAFDQMKNNM</sequence>
<name>PRO_ADE40</name>
<keyword id="KW-0068">Autocatalytic cleavage</keyword>
<keyword id="KW-1015">Disulfide bond</keyword>
<keyword id="KW-0238">DNA-binding</keyword>
<keyword id="KW-1048">Host nucleus</keyword>
<keyword id="KW-0378">Hydrolase</keyword>
<keyword id="KW-0426">Late protein</keyword>
<keyword id="KW-0645">Protease</keyword>
<keyword id="KW-1185">Reference proteome</keyword>
<keyword id="KW-0788">Thiol protease</keyword>
<keyword id="KW-0946">Virion</keyword>
<proteinExistence type="inferred from homology"/>
<comment type="function">
    <text evidence="1">Cleaves viral precursor proteins (pTP, pIIIa, pVI, pVII, pVIII, and pX) inside newly assembled particles giving rise to mature virions. Protease complexed to its cofactor slides along the viral DNA to specifically locate and cleave the viral precursors. Mature virions have a weakened organization compared to the unmature virions, thereby facilitating subsequent uncoating. Without maturation, the particle lacks infectivity and is unable to uncoat. Late in adenovirus infection, in the cytoplasm, may participate in the cytoskeleton destruction. Cleaves host cell cytoskeletal keratins K7 and K18.</text>
</comment>
<comment type="catalytic activity">
    <reaction evidence="1">
        <text>Cleaves proteins of the adenovirus and its host cell at two consensus sites: -Yaa-Xaa-Gly-Gly-|-Xaa- and -Yaa-Xaa-Gly-Xaa-|-Gly- (in which Yaa is Met, Ile or Leu, and Xaa is any amino acid).</text>
        <dbReference type="EC" id="3.4.22.39"/>
    </reaction>
</comment>
<comment type="activity regulation">
    <text evidence="1">Requires DNA and protease cofactor for maximal activation. Inside nascent virions, becomes partially activated by binding to the viral DNA, allowing it to cleave the cofactor that binds to the protease and fully activates it. Actin, like the viral protease cofactor, seems to act as a cofactor in the cleavage of cytokeratin 18 and of actin itself.</text>
</comment>
<comment type="subunit">
    <text evidence="1">Interacts with protease cofactor pVI-C; this interaction is necessary for protease activation.</text>
</comment>
<comment type="subcellular location">
    <subcellularLocation>
        <location evidence="1">Virion</location>
    </subcellularLocation>
    <subcellularLocation>
        <location evidence="1">Host nucleus</location>
    </subcellularLocation>
    <text evidence="1">Present in about 10 copies per virion.</text>
</comment>
<comment type="induction">
    <text evidence="1">Expressed in the late phase of the viral replicative cycle.</text>
</comment>
<comment type="miscellaneous">
    <text evidence="1">All late proteins expressed from the major late promoter are produced by alternative splicing and alternative polyadenylation of the same gene giving rise to non-overlapping ORFs. A leader sequence is present in the N-terminus of all these mRNAs and is recognized by the viral shutoff protein to provide expression although conventional translation via ribosome scanning from the cap has been shut off in the host cell.</text>
</comment>
<comment type="similarity">
    <text evidence="1">Belongs to the peptidase C5 family.</text>
</comment>
<dbReference type="EC" id="3.4.22.39" evidence="1"/>
<dbReference type="EMBL" id="M19540">
    <property type="protein sequence ID" value="AAA52195.1"/>
    <property type="molecule type" value="Genomic_DNA"/>
</dbReference>
<dbReference type="EMBL" id="L19443">
    <property type="protein sequence ID" value="AAC13968.1"/>
    <property type="molecule type" value="Genomic_DNA"/>
</dbReference>
<dbReference type="PIR" id="B28645">
    <property type="entry name" value="W2AD40"/>
</dbReference>
<dbReference type="RefSeq" id="NP_040863.1">
    <property type="nucleotide sequence ID" value="NC_001454.1"/>
</dbReference>
<dbReference type="SMR" id="P11825"/>
<dbReference type="MEROPS" id="C05.001"/>
<dbReference type="DNASU" id="2715932"/>
<dbReference type="GeneID" id="2715932"/>
<dbReference type="Proteomes" id="UP000151954">
    <property type="component" value="Segment"/>
</dbReference>
<dbReference type="GO" id="GO:0042025">
    <property type="term" value="C:host cell nucleus"/>
    <property type="evidence" value="ECO:0007669"/>
    <property type="project" value="UniProtKB-SubCell"/>
</dbReference>
<dbReference type="GO" id="GO:0044423">
    <property type="term" value="C:virion component"/>
    <property type="evidence" value="ECO:0007669"/>
    <property type="project" value="UniProtKB-UniRule"/>
</dbReference>
<dbReference type="GO" id="GO:0004197">
    <property type="term" value="F:cysteine-type endopeptidase activity"/>
    <property type="evidence" value="ECO:0007669"/>
    <property type="project" value="UniProtKB-UniRule"/>
</dbReference>
<dbReference type="GO" id="GO:0003677">
    <property type="term" value="F:DNA binding"/>
    <property type="evidence" value="ECO:0007669"/>
    <property type="project" value="UniProtKB-UniRule"/>
</dbReference>
<dbReference type="GO" id="GO:0006508">
    <property type="term" value="P:proteolysis"/>
    <property type="evidence" value="ECO:0007669"/>
    <property type="project" value="UniProtKB-KW"/>
</dbReference>
<dbReference type="Gene3D" id="3.40.395.10">
    <property type="entry name" value="Adenoviral Proteinase, Chain A"/>
    <property type="match status" value="1"/>
</dbReference>
<dbReference type="HAMAP" id="MF_04059">
    <property type="entry name" value="ADV_PRO"/>
    <property type="match status" value="1"/>
</dbReference>
<dbReference type="InterPro" id="IPR038765">
    <property type="entry name" value="Papain-like_cys_pep_sf"/>
</dbReference>
<dbReference type="InterPro" id="IPR000855">
    <property type="entry name" value="Peptidase_C5"/>
</dbReference>
<dbReference type="Pfam" id="PF00770">
    <property type="entry name" value="Peptidase_C5"/>
    <property type="match status" value="1"/>
</dbReference>
<dbReference type="PIRSF" id="PIRSF001218">
    <property type="entry name" value="Protease_ADV"/>
    <property type="match status" value="1"/>
</dbReference>
<dbReference type="PRINTS" id="PR00703">
    <property type="entry name" value="ADVENDOPTASE"/>
</dbReference>
<dbReference type="SUPFAM" id="SSF54001">
    <property type="entry name" value="Cysteine proteinases"/>
    <property type="match status" value="1"/>
</dbReference>